<feature type="chain" id="PRO_0000056150" description="E3 ubiquitin-protein ligase RAD18">
    <location>
        <begin position="1"/>
        <end position="509"/>
    </location>
</feature>
<feature type="domain" description="SAP" evidence="3">
    <location>
        <begin position="248"/>
        <end position="282"/>
    </location>
</feature>
<feature type="zinc finger region" description="RING-type" evidence="2">
    <location>
        <begin position="25"/>
        <end position="64"/>
    </location>
</feature>
<feature type="zinc finger region" description="UBZ4-type" evidence="4">
    <location>
        <begin position="201"/>
        <end position="228"/>
    </location>
</feature>
<feature type="region of interest" description="Disordered" evidence="5">
    <location>
        <begin position="365"/>
        <end position="401"/>
    </location>
</feature>
<feature type="region of interest" description="Disordered" evidence="5">
    <location>
        <begin position="435"/>
        <end position="509"/>
    </location>
</feature>
<feature type="short sequence motif" description="LR motif">
    <location>
        <begin position="232"/>
        <end position="240"/>
    </location>
</feature>
<feature type="compositionally biased region" description="Polar residues" evidence="5">
    <location>
        <begin position="435"/>
        <end position="446"/>
    </location>
</feature>
<feature type="compositionally biased region" description="Polar residues" evidence="5">
    <location>
        <begin position="463"/>
        <end position="473"/>
    </location>
</feature>
<feature type="compositionally biased region" description="Basic and acidic residues" evidence="5">
    <location>
        <begin position="493"/>
        <end position="509"/>
    </location>
</feature>
<feature type="binding site" evidence="4">
    <location>
        <position position="204"/>
    </location>
    <ligand>
        <name>Zn(2+)</name>
        <dbReference type="ChEBI" id="CHEBI:29105"/>
    </ligand>
</feature>
<feature type="binding site" evidence="4">
    <location>
        <position position="207"/>
    </location>
    <ligand>
        <name>Zn(2+)</name>
        <dbReference type="ChEBI" id="CHEBI:29105"/>
    </ligand>
</feature>
<feature type="binding site" evidence="4">
    <location>
        <position position="219"/>
    </location>
    <ligand>
        <name>Zn(2+)</name>
        <dbReference type="ChEBI" id="CHEBI:29105"/>
    </ligand>
</feature>
<feature type="binding site" evidence="4">
    <location>
        <position position="223"/>
    </location>
    <ligand>
        <name>Zn(2+)</name>
        <dbReference type="ChEBI" id="CHEBI:29105"/>
    </ligand>
</feature>
<feature type="modified residue" description="N-acetylmethionine" evidence="1">
    <location>
        <position position="1"/>
    </location>
</feature>
<feature type="modified residue" description="Phosphoserine" evidence="7">
    <location>
        <position position="99"/>
    </location>
</feature>
<feature type="modified residue" description="Phosphoserine" evidence="7">
    <location>
        <position position="103"/>
    </location>
</feature>
<feature type="modified residue" description="Phosphoserine" evidence="1">
    <location>
        <position position="158"/>
    </location>
</feature>
<feature type="modified residue" description="Phosphoserine" evidence="1">
    <location>
        <position position="164"/>
    </location>
</feature>
<feature type="modified residue" description="Phosphoserine" evidence="1">
    <location>
        <position position="485"/>
    </location>
</feature>
<feature type="sequence conflict" description="In Ref. 1; AAF19193." evidence="6" ref="1">
    <original>W</original>
    <variation>C</variation>
    <location>
        <position position="9"/>
    </location>
</feature>
<feature type="sequence conflict" description="In Ref. 1; AAF19193." evidence="6" ref="1">
    <original>Q</original>
    <variation>P</variation>
    <location>
        <position position="268"/>
    </location>
</feature>
<protein>
    <recommendedName>
        <fullName>E3 ubiquitin-protein ligase RAD18</fullName>
        <ecNumber>2.3.2.27</ecNumber>
    </recommendedName>
    <alternativeName>
        <fullName>Postreplication repair protein RAD18</fullName>
        <shortName>mRAD18Sc</shortName>
    </alternativeName>
    <alternativeName>
        <fullName evidence="6">RING-type E3 ubiquitin transferase RAD18</fullName>
    </alternativeName>
</protein>
<dbReference type="EC" id="2.3.2.27"/>
<dbReference type="EMBL" id="AF205278">
    <property type="protein sequence ID" value="AAF19193.1"/>
    <property type="molecule type" value="mRNA"/>
</dbReference>
<dbReference type="EMBL" id="AK012795">
    <property type="protein sequence ID" value="BAB28475.1"/>
    <property type="molecule type" value="mRNA"/>
</dbReference>
<dbReference type="CCDS" id="CCDS39589.1"/>
<dbReference type="RefSeq" id="NP_067360.2">
    <property type="nucleotide sequence ID" value="NM_021385.2"/>
</dbReference>
<dbReference type="SMR" id="Q9QXK2"/>
<dbReference type="BioGRID" id="208379">
    <property type="interactions" value="3"/>
</dbReference>
<dbReference type="FunCoup" id="Q9QXK2">
    <property type="interactions" value="1915"/>
</dbReference>
<dbReference type="IntAct" id="Q9QXK2">
    <property type="interactions" value="2"/>
</dbReference>
<dbReference type="STRING" id="10090.ENSMUSP00000070619"/>
<dbReference type="GlyGen" id="Q9QXK2">
    <property type="glycosylation" value="1 site"/>
</dbReference>
<dbReference type="iPTMnet" id="Q9QXK2"/>
<dbReference type="PhosphoSitePlus" id="Q9QXK2"/>
<dbReference type="PaxDb" id="10090-ENSMUSP00000070619"/>
<dbReference type="ProteomicsDB" id="300345"/>
<dbReference type="Pumba" id="Q9QXK2"/>
<dbReference type="Antibodypedia" id="10148">
    <property type="antibodies" value="426 antibodies from 40 providers"/>
</dbReference>
<dbReference type="DNASU" id="58186"/>
<dbReference type="Ensembl" id="ENSMUST00000077088.11">
    <property type="protein sequence ID" value="ENSMUSP00000076341.5"/>
    <property type="gene ID" value="ENSMUSG00000030254.17"/>
</dbReference>
<dbReference type="GeneID" id="58186"/>
<dbReference type="KEGG" id="mmu:58186"/>
<dbReference type="UCSC" id="uc009dec.2">
    <property type="organism name" value="mouse"/>
</dbReference>
<dbReference type="AGR" id="MGI:1890476"/>
<dbReference type="CTD" id="56852"/>
<dbReference type="MGI" id="MGI:1890476">
    <property type="gene designation" value="Rad18"/>
</dbReference>
<dbReference type="VEuPathDB" id="HostDB:ENSMUSG00000030254"/>
<dbReference type="eggNOG" id="KOG0287">
    <property type="taxonomic scope" value="Eukaryota"/>
</dbReference>
<dbReference type="GeneTree" id="ENSGT00390000011230"/>
<dbReference type="InParanoid" id="Q9QXK2"/>
<dbReference type="OMA" id="IPNTGPR"/>
<dbReference type="OrthoDB" id="9049620at2759"/>
<dbReference type="PhylomeDB" id="Q9QXK2"/>
<dbReference type="Reactome" id="R-MMU-110314">
    <property type="pathway name" value="Recognition of DNA damage by PCNA-containing replication complex"/>
</dbReference>
<dbReference type="Reactome" id="R-MMU-8866654">
    <property type="pathway name" value="E3 ubiquitin ligases ubiquitinate target proteins"/>
</dbReference>
<dbReference type="UniPathway" id="UPA00143"/>
<dbReference type="BioGRID-ORCS" id="58186">
    <property type="hits" value="5 hits in 114 CRISPR screens"/>
</dbReference>
<dbReference type="ChiTaRS" id="Rad18">
    <property type="organism name" value="mouse"/>
</dbReference>
<dbReference type="PRO" id="PR:Q9QXK2"/>
<dbReference type="Proteomes" id="UP000000589">
    <property type="component" value="Chromosome 6"/>
</dbReference>
<dbReference type="RNAct" id="Q9QXK2">
    <property type="molecule type" value="protein"/>
</dbReference>
<dbReference type="Bgee" id="ENSMUSG00000030254">
    <property type="expression patterns" value="Expressed in embryonic post-anal tail and 181 other cell types or tissues"/>
</dbReference>
<dbReference type="ExpressionAtlas" id="Q9QXK2">
    <property type="expression patterns" value="baseline and differential"/>
</dbReference>
<dbReference type="GO" id="GO:0005813">
    <property type="term" value="C:centrosome"/>
    <property type="evidence" value="ECO:0000250"/>
    <property type="project" value="UniProtKB"/>
</dbReference>
<dbReference type="GO" id="GO:0000785">
    <property type="term" value="C:chromatin"/>
    <property type="evidence" value="ECO:0000314"/>
    <property type="project" value="MGI"/>
</dbReference>
<dbReference type="GO" id="GO:0005737">
    <property type="term" value="C:cytoplasm"/>
    <property type="evidence" value="ECO:0007669"/>
    <property type="project" value="UniProtKB-KW"/>
</dbReference>
<dbReference type="GO" id="GO:0001673">
    <property type="term" value="C:male germ cell nucleus"/>
    <property type="evidence" value="ECO:0000314"/>
    <property type="project" value="MGI"/>
</dbReference>
<dbReference type="GO" id="GO:0042405">
    <property type="term" value="C:nuclear inclusion body"/>
    <property type="evidence" value="ECO:0000250"/>
    <property type="project" value="UniProtKB"/>
</dbReference>
<dbReference type="GO" id="GO:0005634">
    <property type="term" value="C:nucleus"/>
    <property type="evidence" value="ECO:0000314"/>
    <property type="project" value="MGI"/>
</dbReference>
<dbReference type="GO" id="GO:0035861">
    <property type="term" value="C:site of double-strand break"/>
    <property type="evidence" value="ECO:0000250"/>
    <property type="project" value="UniProtKB"/>
</dbReference>
<dbReference type="GO" id="GO:0001741">
    <property type="term" value="C:XY body"/>
    <property type="evidence" value="ECO:0000314"/>
    <property type="project" value="MGI"/>
</dbReference>
<dbReference type="GO" id="GO:0042802">
    <property type="term" value="F:identical protein binding"/>
    <property type="evidence" value="ECO:0000266"/>
    <property type="project" value="MGI"/>
</dbReference>
<dbReference type="GO" id="GO:0031593">
    <property type="term" value="F:polyubiquitin modification-dependent protein binding"/>
    <property type="evidence" value="ECO:0000250"/>
    <property type="project" value="UniProtKB"/>
</dbReference>
<dbReference type="GO" id="GO:0003697">
    <property type="term" value="F:single-stranded DNA binding"/>
    <property type="evidence" value="ECO:0007669"/>
    <property type="project" value="InterPro"/>
</dbReference>
<dbReference type="GO" id="GO:0061630">
    <property type="term" value="F:ubiquitin protein ligase activity"/>
    <property type="evidence" value="ECO:0007669"/>
    <property type="project" value="InterPro"/>
</dbReference>
<dbReference type="GO" id="GO:0008270">
    <property type="term" value="F:zinc ion binding"/>
    <property type="evidence" value="ECO:0007669"/>
    <property type="project" value="UniProtKB-KW"/>
</dbReference>
<dbReference type="GO" id="GO:0006974">
    <property type="term" value="P:DNA damage response"/>
    <property type="evidence" value="ECO:0000315"/>
    <property type="project" value="MGI"/>
</dbReference>
<dbReference type="GO" id="GO:0045910">
    <property type="term" value="P:negative regulation of DNA recombination"/>
    <property type="evidence" value="ECO:0000315"/>
    <property type="project" value="MGI"/>
</dbReference>
<dbReference type="GO" id="GO:0051984">
    <property type="term" value="P:positive regulation of chromosome segregation"/>
    <property type="evidence" value="ECO:0000250"/>
    <property type="project" value="UniProtKB"/>
</dbReference>
<dbReference type="GO" id="GO:0006301">
    <property type="term" value="P:postreplication repair"/>
    <property type="evidence" value="ECO:0007669"/>
    <property type="project" value="InterPro"/>
</dbReference>
<dbReference type="GO" id="GO:0051865">
    <property type="term" value="P:protein autoubiquitination"/>
    <property type="evidence" value="ECO:0000266"/>
    <property type="project" value="MGI"/>
</dbReference>
<dbReference type="GO" id="GO:0006513">
    <property type="term" value="P:protein monoubiquitination"/>
    <property type="evidence" value="ECO:0007669"/>
    <property type="project" value="InterPro"/>
</dbReference>
<dbReference type="GO" id="GO:0009411">
    <property type="term" value="P:response to UV"/>
    <property type="evidence" value="ECO:0000315"/>
    <property type="project" value="MGI"/>
</dbReference>
<dbReference type="GO" id="GO:0007283">
    <property type="term" value="P:spermatogenesis"/>
    <property type="evidence" value="ECO:0000315"/>
    <property type="project" value="MGI"/>
</dbReference>
<dbReference type="CDD" id="cd16529">
    <property type="entry name" value="RING-HC_RAD18"/>
    <property type="match status" value="1"/>
</dbReference>
<dbReference type="FunFam" id="3.30.160.60:FF:000331">
    <property type="entry name" value="E3 ubiquitin-protein ligase RAD18"/>
    <property type="match status" value="1"/>
</dbReference>
<dbReference type="FunFam" id="3.30.40.10:FF:000172">
    <property type="entry name" value="E3 ubiquitin-protein ligase RAD18"/>
    <property type="match status" value="1"/>
</dbReference>
<dbReference type="FunFam" id="1.10.720.30:FF:000024">
    <property type="entry name" value="E3 ubiquitin-protein ligase RAD18 isoform X1"/>
    <property type="match status" value="1"/>
</dbReference>
<dbReference type="Gene3D" id="3.30.160.60">
    <property type="entry name" value="Classic Zinc Finger"/>
    <property type="match status" value="1"/>
</dbReference>
<dbReference type="Gene3D" id="1.10.720.30">
    <property type="entry name" value="SAP domain"/>
    <property type="match status" value="1"/>
</dbReference>
<dbReference type="Gene3D" id="3.30.40.10">
    <property type="entry name" value="Zinc/RING finger domain, C3HC4 (zinc finger)"/>
    <property type="match status" value="1"/>
</dbReference>
<dbReference type="InterPro" id="IPR039577">
    <property type="entry name" value="Rad18"/>
</dbReference>
<dbReference type="InterPro" id="IPR006642">
    <property type="entry name" value="Rad18_UBZ4"/>
</dbReference>
<dbReference type="InterPro" id="IPR003034">
    <property type="entry name" value="SAP_dom"/>
</dbReference>
<dbReference type="InterPro" id="IPR036361">
    <property type="entry name" value="SAP_dom_sf"/>
</dbReference>
<dbReference type="InterPro" id="IPR001841">
    <property type="entry name" value="Znf_RING"/>
</dbReference>
<dbReference type="InterPro" id="IPR013083">
    <property type="entry name" value="Znf_RING/FYVE/PHD"/>
</dbReference>
<dbReference type="InterPro" id="IPR017907">
    <property type="entry name" value="Znf_RING_CS"/>
</dbReference>
<dbReference type="PANTHER" id="PTHR14134">
    <property type="entry name" value="E3 UBIQUITIN-PROTEIN LIGASE RAD18"/>
    <property type="match status" value="1"/>
</dbReference>
<dbReference type="PANTHER" id="PTHR14134:SF2">
    <property type="entry name" value="E3 UBIQUITIN-PROTEIN LIGASE RAD18"/>
    <property type="match status" value="1"/>
</dbReference>
<dbReference type="Pfam" id="PF02037">
    <property type="entry name" value="SAP"/>
    <property type="match status" value="1"/>
</dbReference>
<dbReference type="Pfam" id="PF13923">
    <property type="entry name" value="zf-C3HC4_2"/>
    <property type="match status" value="1"/>
</dbReference>
<dbReference type="SMART" id="SM00184">
    <property type="entry name" value="RING"/>
    <property type="match status" value="1"/>
</dbReference>
<dbReference type="SMART" id="SM00513">
    <property type="entry name" value="SAP"/>
    <property type="match status" value="1"/>
</dbReference>
<dbReference type="SMART" id="SM00734">
    <property type="entry name" value="ZnF_Rad18"/>
    <property type="match status" value="1"/>
</dbReference>
<dbReference type="SUPFAM" id="SSF57850">
    <property type="entry name" value="RING/U-box"/>
    <property type="match status" value="1"/>
</dbReference>
<dbReference type="PROSITE" id="PS50800">
    <property type="entry name" value="SAP"/>
    <property type="match status" value="1"/>
</dbReference>
<dbReference type="PROSITE" id="PS00518">
    <property type="entry name" value="ZF_RING_1"/>
    <property type="match status" value="1"/>
</dbReference>
<dbReference type="PROSITE" id="PS50089">
    <property type="entry name" value="ZF_RING_2"/>
    <property type="match status" value="1"/>
</dbReference>
<dbReference type="PROSITE" id="PS51908">
    <property type="entry name" value="ZF_UBZ4"/>
    <property type="match status" value="1"/>
</dbReference>
<proteinExistence type="evidence at protein level"/>
<name>RAD18_MOUSE</name>
<sequence length="509" mass="57412">MEVLAEPRWPPGLAVMKTIDDLLRCGICFEYFNIAVIIPQCSHNYCSLCIRKFLSYKTQCPTCCVAVTEPDLRNNRLLDELVKSMNFARTHLLQFALESPPISPVSSTSKKVVVKVHNADAAQHPVKQANRLMDKFLIRETGDCVFELLGKENERKFSPQKELSTSAEIKETSLLGKPVLGLSDANGPVTPSTSTMKLDTKVSCPVCGVSIPENHINKHLDSCLSREEKKESLRSSAHKRKPLPKTVYNLLSDRDLKKKLKQYGLSVQGNKQQLIKRHQEFVHMYNAQCDALHPKSAAEIVQEIESMEKTRMRLEASKLNENVMVFTKNQTEKEIEEVHSEYRKKHQNAFQLLVDQAKKGYKKTGRVSQAAAMRTDEPAETLPSMRTDEPAETLPSMRTDEPAETLPLMRADEPAETLPSECIAQEDNVSFSDTVSVTNHFPQPQLDSPGPSEPERPDDSSSCTDILFSSDSDSCNRNDQNREVSPQQTRRTRASECVEIEPRNKRNKN</sequence>
<keyword id="KW-0007">Acetylation</keyword>
<keyword id="KW-0963">Cytoplasm</keyword>
<keyword id="KW-0206">Cytoskeleton</keyword>
<keyword id="KW-0227">DNA damage</keyword>
<keyword id="KW-0234">DNA repair</keyword>
<keyword id="KW-0238">DNA-binding</keyword>
<keyword id="KW-0479">Metal-binding</keyword>
<keyword id="KW-0539">Nucleus</keyword>
<keyword id="KW-0597">Phosphoprotein</keyword>
<keyword id="KW-1185">Reference proteome</keyword>
<keyword id="KW-0808">Transferase</keyword>
<keyword id="KW-0833">Ubl conjugation pathway</keyword>
<keyword id="KW-0862">Zinc</keyword>
<keyword id="KW-0863">Zinc-finger</keyword>
<reference key="1">
    <citation type="journal article" date="2000" name="Genomics">
        <title>Characterization of mRAD18Sc, a mouse homolog of the yeast postreplication repair gene RAD18.</title>
        <authorList>
            <person name="van der Laan R."/>
            <person name="Roest H.P."/>
            <person name="Hoogerbrugge J.W."/>
            <person name="Smit E.M.E."/>
            <person name="Slater R."/>
            <person name="Baarends W.M."/>
            <person name="Hoeijmakers J.H.J."/>
            <person name="Grootegoed J.A."/>
        </authorList>
    </citation>
    <scope>NUCLEOTIDE SEQUENCE [MRNA]</scope>
    <scope>CHARACTERIZATION</scope>
</reference>
<reference key="2">
    <citation type="journal article" date="2005" name="Science">
        <title>The transcriptional landscape of the mammalian genome.</title>
        <authorList>
            <person name="Carninci P."/>
            <person name="Kasukawa T."/>
            <person name="Katayama S."/>
            <person name="Gough J."/>
            <person name="Frith M.C."/>
            <person name="Maeda N."/>
            <person name="Oyama R."/>
            <person name="Ravasi T."/>
            <person name="Lenhard B."/>
            <person name="Wells C."/>
            <person name="Kodzius R."/>
            <person name="Shimokawa K."/>
            <person name="Bajic V.B."/>
            <person name="Brenner S.E."/>
            <person name="Batalov S."/>
            <person name="Forrest A.R."/>
            <person name="Zavolan M."/>
            <person name="Davis M.J."/>
            <person name="Wilming L.G."/>
            <person name="Aidinis V."/>
            <person name="Allen J.E."/>
            <person name="Ambesi-Impiombato A."/>
            <person name="Apweiler R."/>
            <person name="Aturaliya R.N."/>
            <person name="Bailey T.L."/>
            <person name="Bansal M."/>
            <person name="Baxter L."/>
            <person name="Beisel K.W."/>
            <person name="Bersano T."/>
            <person name="Bono H."/>
            <person name="Chalk A.M."/>
            <person name="Chiu K.P."/>
            <person name="Choudhary V."/>
            <person name="Christoffels A."/>
            <person name="Clutterbuck D.R."/>
            <person name="Crowe M.L."/>
            <person name="Dalla E."/>
            <person name="Dalrymple B.P."/>
            <person name="de Bono B."/>
            <person name="Della Gatta G."/>
            <person name="di Bernardo D."/>
            <person name="Down T."/>
            <person name="Engstrom P."/>
            <person name="Fagiolini M."/>
            <person name="Faulkner G."/>
            <person name="Fletcher C.F."/>
            <person name="Fukushima T."/>
            <person name="Furuno M."/>
            <person name="Futaki S."/>
            <person name="Gariboldi M."/>
            <person name="Georgii-Hemming P."/>
            <person name="Gingeras T.R."/>
            <person name="Gojobori T."/>
            <person name="Green R.E."/>
            <person name="Gustincich S."/>
            <person name="Harbers M."/>
            <person name="Hayashi Y."/>
            <person name="Hensch T.K."/>
            <person name="Hirokawa N."/>
            <person name="Hill D."/>
            <person name="Huminiecki L."/>
            <person name="Iacono M."/>
            <person name="Ikeo K."/>
            <person name="Iwama A."/>
            <person name="Ishikawa T."/>
            <person name="Jakt M."/>
            <person name="Kanapin A."/>
            <person name="Katoh M."/>
            <person name="Kawasawa Y."/>
            <person name="Kelso J."/>
            <person name="Kitamura H."/>
            <person name="Kitano H."/>
            <person name="Kollias G."/>
            <person name="Krishnan S.P."/>
            <person name="Kruger A."/>
            <person name="Kummerfeld S.K."/>
            <person name="Kurochkin I.V."/>
            <person name="Lareau L.F."/>
            <person name="Lazarevic D."/>
            <person name="Lipovich L."/>
            <person name="Liu J."/>
            <person name="Liuni S."/>
            <person name="McWilliam S."/>
            <person name="Madan Babu M."/>
            <person name="Madera M."/>
            <person name="Marchionni L."/>
            <person name="Matsuda H."/>
            <person name="Matsuzawa S."/>
            <person name="Miki H."/>
            <person name="Mignone F."/>
            <person name="Miyake S."/>
            <person name="Morris K."/>
            <person name="Mottagui-Tabar S."/>
            <person name="Mulder N."/>
            <person name="Nakano N."/>
            <person name="Nakauchi H."/>
            <person name="Ng P."/>
            <person name="Nilsson R."/>
            <person name="Nishiguchi S."/>
            <person name="Nishikawa S."/>
            <person name="Nori F."/>
            <person name="Ohara O."/>
            <person name="Okazaki Y."/>
            <person name="Orlando V."/>
            <person name="Pang K.C."/>
            <person name="Pavan W.J."/>
            <person name="Pavesi G."/>
            <person name="Pesole G."/>
            <person name="Petrovsky N."/>
            <person name="Piazza S."/>
            <person name="Reed J."/>
            <person name="Reid J.F."/>
            <person name="Ring B.Z."/>
            <person name="Ringwald M."/>
            <person name="Rost B."/>
            <person name="Ruan Y."/>
            <person name="Salzberg S.L."/>
            <person name="Sandelin A."/>
            <person name="Schneider C."/>
            <person name="Schoenbach C."/>
            <person name="Sekiguchi K."/>
            <person name="Semple C.A."/>
            <person name="Seno S."/>
            <person name="Sessa L."/>
            <person name="Sheng Y."/>
            <person name="Shibata Y."/>
            <person name="Shimada H."/>
            <person name="Shimada K."/>
            <person name="Silva D."/>
            <person name="Sinclair B."/>
            <person name="Sperling S."/>
            <person name="Stupka E."/>
            <person name="Sugiura K."/>
            <person name="Sultana R."/>
            <person name="Takenaka Y."/>
            <person name="Taki K."/>
            <person name="Tammoja K."/>
            <person name="Tan S.L."/>
            <person name="Tang S."/>
            <person name="Taylor M.S."/>
            <person name="Tegner J."/>
            <person name="Teichmann S.A."/>
            <person name="Ueda H.R."/>
            <person name="van Nimwegen E."/>
            <person name="Verardo R."/>
            <person name="Wei C.L."/>
            <person name="Yagi K."/>
            <person name="Yamanishi H."/>
            <person name="Zabarovsky E."/>
            <person name="Zhu S."/>
            <person name="Zimmer A."/>
            <person name="Hide W."/>
            <person name="Bult C."/>
            <person name="Grimmond S.M."/>
            <person name="Teasdale R.D."/>
            <person name="Liu E.T."/>
            <person name="Brusic V."/>
            <person name="Quackenbush J."/>
            <person name="Wahlestedt C."/>
            <person name="Mattick J.S."/>
            <person name="Hume D.A."/>
            <person name="Kai C."/>
            <person name="Sasaki D."/>
            <person name="Tomaru Y."/>
            <person name="Fukuda S."/>
            <person name="Kanamori-Katayama M."/>
            <person name="Suzuki M."/>
            <person name="Aoki J."/>
            <person name="Arakawa T."/>
            <person name="Iida J."/>
            <person name="Imamura K."/>
            <person name="Itoh M."/>
            <person name="Kato T."/>
            <person name="Kawaji H."/>
            <person name="Kawagashira N."/>
            <person name="Kawashima T."/>
            <person name="Kojima M."/>
            <person name="Kondo S."/>
            <person name="Konno H."/>
            <person name="Nakano K."/>
            <person name="Ninomiya N."/>
            <person name="Nishio T."/>
            <person name="Okada M."/>
            <person name="Plessy C."/>
            <person name="Shibata K."/>
            <person name="Shiraki T."/>
            <person name="Suzuki S."/>
            <person name="Tagami M."/>
            <person name="Waki K."/>
            <person name="Watahiki A."/>
            <person name="Okamura-Oho Y."/>
            <person name="Suzuki H."/>
            <person name="Kawai J."/>
            <person name="Hayashizaki Y."/>
        </authorList>
    </citation>
    <scope>NUCLEOTIDE SEQUENCE [LARGE SCALE MRNA]</scope>
    <source>
        <strain>C57BL/6J</strain>
        <tissue>Embryo</tissue>
    </source>
</reference>
<reference key="3">
    <citation type="journal article" date="2010" name="Cell">
        <title>A tissue-specific atlas of mouse protein phosphorylation and expression.</title>
        <authorList>
            <person name="Huttlin E.L."/>
            <person name="Jedrychowski M.P."/>
            <person name="Elias J.E."/>
            <person name="Goswami T."/>
            <person name="Rad R."/>
            <person name="Beausoleil S.A."/>
            <person name="Villen J."/>
            <person name="Haas W."/>
            <person name="Sowa M.E."/>
            <person name="Gygi S.P."/>
        </authorList>
    </citation>
    <scope>PHOSPHORYLATION [LARGE SCALE ANALYSIS] AT SER-99 AND SER-103</scope>
    <scope>IDENTIFICATION BY MASS SPECTROMETRY [LARGE SCALE ANALYSIS]</scope>
    <source>
        <tissue>Testis</tissue>
    </source>
</reference>
<accession>Q9QXK2</accession>
<accession>Q9CZB8</accession>
<comment type="function">
    <text>E3 ubiquitin-protein ligase involved in postreplication repair of UV-damaged DNA. Postreplication repair functions in gap-filling of a daughter strand on replication of damaged DNA. Associates to the E2 ubiquitin conjugating enzyme UBE2B to form the UBE2B-RAD18 ubiquitin ligase complex involved in mono-ubiquitination of DNA-associated PCNA on 'Lys-164'. Has ssDNA binding activity.</text>
</comment>
<comment type="catalytic activity">
    <reaction>
        <text>S-ubiquitinyl-[E2 ubiquitin-conjugating enzyme]-L-cysteine + [acceptor protein]-L-lysine = [E2 ubiquitin-conjugating enzyme]-L-cysteine + N(6)-ubiquitinyl-[acceptor protein]-L-lysine.</text>
        <dbReference type="EC" id="2.3.2.27"/>
    </reaction>
</comment>
<comment type="pathway">
    <text>Protein modification; protein ubiquitination.</text>
</comment>
<comment type="subunit">
    <text evidence="1">Homodimer. Interacts with UBE2A and UBE2B, one homodimer binding one molecule of UBE2B. Interacts with HLTF. Interacts with SHPRH. Interacts with SPRTN; leading to enhance chromatin association of RAD18 and RAD18-mediated PCNA ubiquitination and translesion DNA synthesis. Interacts (via C-terminus and phosphorylated form) with SLF1 (via BRCT domains); this interaction is required for efficient repair of UV-induced DNA damage. Interacts with SLF2. Interacts with SMC5; this interaction is increased in a SLF1 or SLF2-dependent manner.</text>
</comment>
<comment type="subcellular location">
    <subcellularLocation>
        <location evidence="1">Nucleus</location>
    </subcellularLocation>
    <subcellularLocation>
        <location evidence="1">Cytoplasm</location>
        <location evidence="1">Cytoskeleton</location>
        <location evidence="1">Microtubule organizing center</location>
        <location evidence="1">Centrosome</location>
    </subcellularLocation>
    <text evidence="1">Associates with chromatin. Colocalizes with SLF1 in the nucleus and to centrosomes. Relocalizes with SLF1 to nuclear foci in response to DNA damage. Accumulates with the SLF1-SLF2 and SMC5-SMC6 complexes at replication-coupled DNA interstrand repair and DNA double-strand breaks (DSBs) sites on chromatin in a ubiquitin-dependent manner.</text>
</comment>
<comment type="tissue specificity">
    <text>Expressed in thymus, spleen, brain, and ovary.</text>
</comment>
<comment type="similarity">
    <text evidence="6">Belongs to the RAD18 family.</text>
</comment>
<gene>
    <name type="primary">Rad18</name>
    <name type="synonym">Rad18sc</name>
</gene>
<evidence type="ECO:0000250" key="1">
    <source>
        <dbReference type="UniProtKB" id="Q9NS91"/>
    </source>
</evidence>
<evidence type="ECO:0000255" key="2">
    <source>
        <dbReference type="PROSITE-ProRule" id="PRU00175"/>
    </source>
</evidence>
<evidence type="ECO:0000255" key="3">
    <source>
        <dbReference type="PROSITE-ProRule" id="PRU00186"/>
    </source>
</evidence>
<evidence type="ECO:0000255" key="4">
    <source>
        <dbReference type="PROSITE-ProRule" id="PRU01256"/>
    </source>
</evidence>
<evidence type="ECO:0000256" key="5">
    <source>
        <dbReference type="SAM" id="MobiDB-lite"/>
    </source>
</evidence>
<evidence type="ECO:0000305" key="6"/>
<evidence type="ECO:0007744" key="7">
    <source>
    </source>
</evidence>
<organism>
    <name type="scientific">Mus musculus</name>
    <name type="common">Mouse</name>
    <dbReference type="NCBI Taxonomy" id="10090"/>
    <lineage>
        <taxon>Eukaryota</taxon>
        <taxon>Metazoa</taxon>
        <taxon>Chordata</taxon>
        <taxon>Craniata</taxon>
        <taxon>Vertebrata</taxon>
        <taxon>Euteleostomi</taxon>
        <taxon>Mammalia</taxon>
        <taxon>Eutheria</taxon>
        <taxon>Euarchontoglires</taxon>
        <taxon>Glires</taxon>
        <taxon>Rodentia</taxon>
        <taxon>Myomorpha</taxon>
        <taxon>Muroidea</taxon>
        <taxon>Muridae</taxon>
        <taxon>Murinae</taxon>
        <taxon>Mus</taxon>
        <taxon>Mus</taxon>
    </lineage>
</organism>